<name>TRM1_HCMVA</name>
<comment type="function">
    <text evidence="1">Component of the molecular motor that translocates viral genomic DNA in empty capsid during DNA packaging. Forms a tripartite terminase complex together with TRM2 and TRM3 in the host cytoplasm. Once the complex reaches the host nucleus, it interacts with the capsid portal vertex. This portal forms a ring in which genomic DNA is translocated into the capsid. TRM1 carries an endonuclease activity that plays an important role for the cleavage of concatemeric viral DNA into unit length genomes.</text>
</comment>
<comment type="subunit">
    <text evidence="1">Associates with TRM2 and TRM3 to form the tripartite terminase complex. Interacts with portal protein.</text>
</comment>
<comment type="subcellular location">
    <subcellularLocation>
        <location evidence="1">Host nucleus</location>
    </subcellularLocation>
    <text evidence="1">Found associated with the external surface of the viral capsid during assembly and DNA packaging, but seems absent in extracellular mature virions.</text>
</comment>
<comment type="similarity">
    <text evidence="1">Belongs to the herpesviridae TRM1 protein family.</text>
</comment>
<organismHost>
    <name type="scientific">Homo sapiens</name>
    <name type="common">Human</name>
    <dbReference type="NCBI Taxonomy" id="9606"/>
</organismHost>
<dbReference type="EMBL" id="X17403">
    <property type="protein sequence ID" value="CAA35371.1"/>
    <property type="molecule type" value="Genomic_DNA"/>
</dbReference>
<dbReference type="EMBL" id="BK000394">
    <property type="protein sequence ID" value="DAA00161.1"/>
    <property type="molecule type" value="Genomic_DNA"/>
</dbReference>
<dbReference type="PIR" id="S09819">
    <property type="entry name" value="WMBE56"/>
</dbReference>
<dbReference type="SMR" id="P16724"/>
<dbReference type="ChEMBL" id="CHEMBL3991482"/>
<dbReference type="Proteomes" id="UP000008991">
    <property type="component" value="Segment"/>
</dbReference>
<dbReference type="Proteomes" id="UP000008992">
    <property type="component" value="Segment"/>
</dbReference>
<dbReference type="GO" id="GO:0042025">
    <property type="term" value="C:host cell nucleus"/>
    <property type="evidence" value="ECO:0007669"/>
    <property type="project" value="UniProtKB-SubCell"/>
</dbReference>
<dbReference type="GO" id="GO:0005524">
    <property type="term" value="F:ATP binding"/>
    <property type="evidence" value="ECO:0007669"/>
    <property type="project" value="UniProtKB-KW"/>
</dbReference>
<dbReference type="GO" id="GO:0008270">
    <property type="term" value="F:zinc ion binding"/>
    <property type="evidence" value="ECO:0007669"/>
    <property type="project" value="UniProtKB-KW"/>
</dbReference>
<dbReference type="GO" id="GO:0019073">
    <property type="term" value="P:viral DNA genome packaging"/>
    <property type="evidence" value="ECO:0007669"/>
    <property type="project" value="InterPro"/>
</dbReference>
<dbReference type="HAMAP" id="MF_04014">
    <property type="entry name" value="HSV_TRM1"/>
    <property type="match status" value="1"/>
</dbReference>
<dbReference type="InterPro" id="IPR000501">
    <property type="entry name" value="UL28/UL56"/>
</dbReference>
<dbReference type="Pfam" id="PF01366">
    <property type="entry name" value="PRTP"/>
    <property type="match status" value="1"/>
</dbReference>
<keyword id="KW-0067">ATP-binding</keyword>
<keyword id="KW-1048">Host nucleus</keyword>
<keyword id="KW-0426">Late protein</keyword>
<keyword id="KW-0479">Metal-binding</keyword>
<keyword id="KW-0547">Nucleotide-binding</keyword>
<keyword id="KW-1185">Reference proteome</keyword>
<keyword id="KW-0231">Viral genome packaging</keyword>
<keyword id="KW-1188">Viral release from host cell</keyword>
<keyword id="KW-0862">Zinc</keyword>
<keyword id="KW-0863">Zinc-finger</keyword>
<accession>P16724</accession>
<accession>Q7M6M7</accession>
<organism>
    <name type="scientific">Human cytomegalovirus (strain AD169)</name>
    <name type="common">HHV-5</name>
    <name type="synonym">Human herpesvirus 5</name>
    <dbReference type="NCBI Taxonomy" id="10360"/>
    <lineage>
        <taxon>Viruses</taxon>
        <taxon>Duplodnaviria</taxon>
        <taxon>Heunggongvirae</taxon>
        <taxon>Peploviricota</taxon>
        <taxon>Herviviricetes</taxon>
        <taxon>Herpesvirales</taxon>
        <taxon>Orthoherpesviridae</taxon>
        <taxon>Betaherpesvirinae</taxon>
        <taxon>Cytomegalovirus</taxon>
        <taxon>Cytomegalovirus humanbeta5</taxon>
        <taxon>Human cytomegalovirus</taxon>
    </lineage>
</organism>
<evidence type="ECO:0000255" key="1">
    <source>
        <dbReference type="HAMAP-Rule" id="MF_04014"/>
    </source>
</evidence>
<evidence type="ECO:0000256" key="2">
    <source>
        <dbReference type="SAM" id="MobiDB-lite"/>
    </source>
</evidence>
<feature type="chain" id="PRO_0000115890" description="Tripartite terminase subunit 1">
    <location>
        <begin position="1"/>
        <end position="850"/>
    </location>
</feature>
<feature type="zinc finger region" description="C3H1-type" evidence="1">
    <location>
        <begin position="191"/>
        <end position="219"/>
    </location>
</feature>
<feature type="region of interest" description="Disordered" evidence="2">
    <location>
        <begin position="438"/>
        <end position="489"/>
    </location>
</feature>
<feature type="region of interest" description="Disordered" evidence="2">
    <location>
        <begin position="801"/>
        <end position="831"/>
    </location>
</feature>
<feature type="short sequence motif" description="Nuclear localization signal" evidence="1">
    <location>
        <begin position="822"/>
        <end position="827"/>
    </location>
</feature>
<feature type="compositionally biased region" description="Low complexity" evidence="2">
    <location>
        <begin position="439"/>
        <end position="457"/>
    </location>
</feature>
<feature type="compositionally biased region" description="Gly residues" evidence="2">
    <location>
        <begin position="458"/>
        <end position="481"/>
    </location>
</feature>
<feature type="compositionally biased region" description="Basic residues" evidence="2">
    <location>
        <begin position="816"/>
        <end position="827"/>
    </location>
</feature>
<feature type="binding site" evidence="1">
    <location>
        <begin position="709"/>
        <end position="716"/>
    </location>
    <ligand>
        <name>ATP</name>
        <dbReference type="ChEBI" id="CHEBI:30616"/>
    </ligand>
</feature>
<reference key="1">
    <citation type="journal article" date="1990" name="Curr. Top. Microbiol. Immunol.">
        <title>Analysis of the protein-coding content of the sequence of human cytomegalovirus strain AD169.</title>
        <authorList>
            <person name="Chee M.S."/>
            <person name="Bankier A.T."/>
            <person name="Beck S."/>
            <person name="Bohni R."/>
            <person name="Brown C.M."/>
            <person name="Cerny R."/>
            <person name="Horsnell T."/>
            <person name="Hutchison C.A. III"/>
            <person name="Kouzarides T."/>
            <person name="Martignetti J.A."/>
            <person name="Preddie E."/>
            <person name="Satchwell S.C."/>
            <person name="Tomlinson P."/>
            <person name="Weston K.M."/>
            <person name="Barrell B.G."/>
        </authorList>
    </citation>
    <scope>NUCLEOTIDE SEQUENCE [LARGE SCALE GENOMIC DNA]</scope>
</reference>
<reference key="2">
    <citation type="journal article" date="2003" name="J. Gen. Virol.">
        <title>The human cytomegalovirus genome revisited: comparison with the chimpanzee cytomegalovirus genome.</title>
        <authorList>
            <person name="Davison A.J."/>
            <person name="Dolan A."/>
            <person name="Akter P."/>
            <person name="Addison C."/>
            <person name="Dargan D.J."/>
            <person name="Alcendor D.J."/>
            <person name="McGeoch D.J."/>
            <person name="Hayward G.S."/>
        </authorList>
    </citation>
    <scope>GENOME REANNOTATION</scope>
</reference>
<reference key="3">
    <citation type="journal article" date="2003" name="J. Gen. Virol.">
        <authorList>
            <person name="Davison A.J."/>
            <person name="Dolan A."/>
            <person name="Akter P."/>
            <person name="Addison C."/>
            <person name="Dargan D.J."/>
            <person name="Alcendor D.J."/>
            <person name="McGeoch D.J."/>
            <person name="Hayward G.S."/>
        </authorList>
    </citation>
    <scope>ERRATUM OF PUBMED:12533697</scope>
</reference>
<sequence length="850" mass="95868">MEMNLLQKLCVVCSKCNEYAMELECLKYCDPNVLLAESTPFKRNAAAIVYLYRKIYPEVVAQNRTQSSLLTLYLEMLLKALHEDTALLDRALMAYSRQPDRAAFYRTVLRLDRCDRHHTVELQFTDNVRFSVSLATLNDIERFLCKMNYVYGILAPEAGLEVCAQLLELLRRLCGISPVARQEVYVEGTTCAQCYEELTIIPNQGRSLNKRLQGLLCNHIAVHRPSSQSDVNIQTVEQDLLDLTTRIPHLAGVLSALKSLFSSSSAYHSYIQEAEEALREYNLFTDIPERIYSLSDFTYWSRTSEVIVKRVGITIQQLNVYHQLCRALMNGISRHLYGEDVEDIFVLGEKALDGEERMFVGSVFAAPNRIIDLITSLSIQAFEDNPVFNKLHESNEMYTKIKHILEEIRRPLPDGTGGDGPEGEAIHLRGREAMSGTGTTLMTASNSSNSSTHSQRNNGGGGRARGGGKKVVGGGVNGQDGDGSENGLRVRNCDEHEALDLVDARSRIHNVTREVNVRKRAYLQKVSEVGYGKVIRCIKTQERLTSKLIDVNLVGPLCLDFISKLMNGFLYRSQYHQDQDVVDVGDQFTYDEHLYVVNNLIHKSLPVESLPLLGQQIYELCNGPLFTHCTDRYPLSHNVDMAYACDNAGVLPHVKDDLVKCAEGTVYPSEWMVVKYMGFFNFSDCQDLNVLQKEMWMHVRELVLSVALYNETFGKQLSIACLRDELHPDRDVILTYNKEWPLLLRHEGSLYKSKDLYLLLYRHLSRPDESGDVPTAPVAKPSTLTAAAAVSGVFREPDRPWLPSPYPSSSTAGVSRRVRATRKRPRRASSLLDLARDEHGIQDLVPGSLR</sequence>
<proteinExistence type="inferred from homology"/>
<protein>
    <recommendedName>
        <fullName evidence="1">Tripartite terminase subunit 1</fullName>
    </recommendedName>
</protein>
<gene>
    <name evidence="1" type="primary">TRM1</name>
    <name type="ordered locus">UL56</name>
</gene>